<proteinExistence type="evidence at protein level"/>
<name>SUCD_ECOLI</name>
<protein>
    <recommendedName>
        <fullName evidence="1">Succinate--CoA ligase [ADP-forming] subunit alpha</fullName>
        <ecNumber evidence="1 2">6.2.1.5</ecNumber>
    </recommendedName>
    <alternativeName>
        <fullName evidence="1">Succinyl-CoA synthetase subunit alpha</fullName>
        <shortName evidence="1">SCS-alpha</shortName>
    </alternativeName>
</protein>
<evidence type="ECO:0000255" key="1">
    <source>
        <dbReference type="HAMAP-Rule" id="MF_01988"/>
    </source>
</evidence>
<evidence type="ECO:0000269" key="2">
    <source>
    </source>
</evidence>
<evidence type="ECO:0000269" key="3">
    <source>
    </source>
</evidence>
<evidence type="ECO:0000269" key="4">
    <source>
    </source>
</evidence>
<evidence type="ECO:0000269" key="5">
    <source>
    </source>
</evidence>
<evidence type="ECO:0000269" key="6">
    <source>
    </source>
</evidence>
<evidence type="ECO:0000269" key="7">
    <source>
    </source>
</evidence>
<evidence type="ECO:0000269" key="8">
    <source>
    </source>
</evidence>
<evidence type="ECO:0000269" key="9">
    <source ref="7"/>
</evidence>
<evidence type="ECO:0000305" key="10">
    <source>
    </source>
</evidence>
<evidence type="ECO:0007829" key="11">
    <source>
        <dbReference type="PDB" id="2NU7"/>
    </source>
</evidence>
<evidence type="ECO:0007829" key="12">
    <source>
        <dbReference type="PDB" id="2NU8"/>
    </source>
</evidence>
<evidence type="ECO:0007829" key="13">
    <source>
        <dbReference type="PDB" id="2NUA"/>
    </source>
</evidence>
<evidence type="ECO:0007829" key="14">
    <source>
        <dbReference type="PDB" id="2SCU"/>
    </source>
</evidence>
<gene>
    <name evidence="1" type="primary">sucD</name>
    <name type="ordered locus">b0729</name>
    <name type="ordered locus">JW0718</name>
</gene>
<comment type="function">
    <text evidence="1 2">Succinyl-CoA synthetase functions in the citric acid cycle (TCA), coupling the hydrolysis of succinyl-CoA to the synthesis of either ATP or GTP and thus represents the only step of substrate-level phosphorylation in the TCA. The alpha subunit of the enzyme binds the substrates coenzyme A and phosphate, while succinate binding and nucleotide specificity is provided by the beta subunit. Can use either ATP or GTP, but prefers ATP. It can also function in the other direction for anabolic purposes, and this may be particularly important for providing succinyl-CoA during anaerobic growth when the oxidative route from 2-oxoglutarate is severely repressed.</text>
</comment>
<comment type="catalytic activity">
    <reaction evidence="1 2">
        <text>succinate + ATP + CoA = succinyl-CoA + ADP + phosphate</text>
        <dbReference type="Rhea" id="RHEA:17661"/>
        <dbReference type="ChEBI" id="CHEBI:30031"/>
        <dbReference type="ChEBI" id="CHEBI:30616"/>
        <dbReference type="ChEBI" id="CHEBI:43474"/>
        <dbReference type="ChEBI" id="CHEBI:57287"/>
        <dbReference type="ChEBI" id="CHEBI:57292"/>
        <dbReference type="ChEBI" id="CHEBI:456216"/>
        <dbReference type="EC" id="6.2.1.5"/>
    </reaction>
    <physiologicalReaction direction="right-to-left" evidence="1 2">
        <dbReference type="Rhea" id="RHEA:17663"/>
    </physiologicalReaction>
</comment>
<comment type="catalytic activity">
    <reaction evidence="1 2">
        <text>GTP + succinate + CoA = succinyl-CoA + GDP + phosphate</text>
        <dbReference type="Rhea" id="RHEA:22120"/>
        <dbReference type="ChEBI" id="CHEBI:30031"/>
        <dbReference type="ChEBI" id="CHEBI:37565"/>
        <dbReference type="ChEBI" id="CHEBI:43474"/>
        <dbReference type="ChEBI" id="CHEBI:57287"/>
        <dbReference type="ChEBI" id="CHEBI:57292"/>
        <dbReference type="ChEBI" id="CHEBI:58189"/>
    </reaction>
    <physiologicalReaction direction="right-to-left" evidence="1 2">
        <dbReference type="Rhea" id="RHEA:22122"/>
    </physiologicalReaction>
</comment>
<comment type="activity regulation">
    <text>Exhibits two interesting properties: 'substrate synergism', in which the enzyme is most active for the catalysis of its partial reactions only when all the substrate-binding sites are occupied, and 'catalytic cooperativity' between alternating active sites in the tetramer, whereby the interaction of substrates (particularly ATP) at one site is needed to promote catalysis at the other.</text>
</comment>
<comment type="biophysicochemical properties">
    <kinetics>
        <KM evidence="2">0.25 mM for succinate</KM>
        <KM evidence="2">4 uM for CoA</KM>
        <text evidence="2">kcat is 2684 min(-1) with ATP as substrate and 1471 min(-1) with GTP as substrate.</text>
    </kinetics>
</comment>
<comment type="pathway">
    <text evidence="1 10">Carbohydrate metabolism; tricarboxylic acid cycle; succinate from succinyl-CoA (ligase route): step 1/1.</text>
</comment>
<comment type="subunit">
    <text evidence="1 6 8">Heterotetramer of two alpha and two beta subunits.</text>
</comment>
<comment type="interaction">
    <interactant intactId="EBI-369078">
        <id>P0AGE9</id>
    </interactant>
    <interactant intactId="EBI-369117">
        <id>P0A836</id>
        <label>sucC</label>
    </interactant>
    <organismsDiffer>false</organismsDiffer>
    <experiments>4</experiments>
</comment>
<comment type="miscellaneous">
    <text>Succinyl-CoA synthetase (SCS) of E.coli catalyzes its reaction via three steps that involve phosphoryl enzyme and enzyme-bound succinyl phosphate as intermediates.</text>
</comment>
<comment type="similarity">
    <text evidence="1">Belongs to the succinate/malate CoA ligase alpha subunit family.</text>
</comment>
<reference key="1">
    <citation type="journal article" date="1985" name="Biochemistry">
        <title>Primary structure of the succinyl-CoA synthetase of Escherichia coli.</title>
        <authorList>
            <person name="Buck D."/>
            <person name="Spencer M.E."/>
            <person name="Guest J.R."/>
        </authorList>
    </citation>
    <scope>NUCLEOTIDE SEQUENCE [GENOMIC DNA]</scope>
</reference>
<reference key="2">
    <citation type="journal article" date="1996" name="DNA Res.">
        <title>A 718-kb DNA sequence of the Escherichia coli K-12 genome corresponding to the 12.7-28.0 min region on the linkage map.</title>
        <authorList>
            <person name="Oshima T."/>
            <person name="Aiba H."/>
            <person name="Baba T."/>
            <person name="Fujita K."/>
            <person name="Hayashi K."/>
            <person name="Honjo A."/>
            <person name="Ikemoto K."/>
            <person name="Inada T."/>
            <person name="Itoh T."/>
            <person name="Kajihara M."/>
            <person name="Kanai K."/>
            <person name="Kashimoto K."/>
            <person name="Kimura S."/>
            <person name="Kitagawa M."/>
            <person name="Makino K."/>
            <person name="Masuda S."/>
            <person name="Miki T."/>
            <person name="Mizobuchi K."/>
            <person name="Mori H."/>
            <person name="Motomura K."/>
            <person name="Nakamura Y."/>
            <person name="Nashimoto H."/>
            <person name="Nishio Y."/>
            <person name="Saito N."/>
            <person name="Sampei G."/>
            <person name="Seki Y."/>
            <person name="Tagami H."/>
            <person name="Takemoto K."/>
            <person name="Wada C."/>
            <person name="Yamamoto Y."/>
            <person name="Yano M."/>
            <person name="Horiuchi T."/>
        </authorList>
    </citation>
    <scope>NUCLEOTIDE SEQUENCE [LARGE SCALE GENOMIC DNA]</scope>
    <source>
        <strain>K12 / W3110 / ATCC 27325 / DSM 5911</strain>
    </source>
</reference>
<reference key="3">
    <citation type="journal article" date="1997" name="Science">
        <title>The complete genome sequence of Escherichia coli K-12.</title>
        <authorList>
            <person name="Blattner F.R."/>
            <person name="Plunkett G. III"/>
            <person name="Bloch C.A."/>
            <person name="Perna N.T."/>
            <person name="Burland V."/>
            <person name="Riley M."/>
            <person name="Collado-Vides J."/>
            <person name="Glasner J.D."/>
            <person name="Rode C.K."/>
            <person name="Mayhew G.F."/>
            <person name="Gregor J."/>
            <person name="Davis N.W."/>
            <person name="Kirkpatrick H.A."/>
            <person name="Goeden M.A."/>
            <person name="Rose D.J."/>
            <person name="Mau B."/>
            <person name="Shao Y."/>
        </authorList>
    </citation>
    <scope>NUCLEOTIDE SEQUENCE [LARGE SCALE GENOMIC DNA]</scope>
    <source>
        <strain>K12 / MG1655 / ATCC 47076</strain>
    </source>
</reference>
<reference key="4">
    <citation type="journal article" date="2006" name="Mol. Syst. Biol.">
        <title>Highly accurate genome sequences of Escherichia coli K-12 strains MG1655 and W3110.</title>
        <authorList>
            <person name="Hayashi K."/>
            <person name="Morooka N."/>
            <person name="Yamamoto Y."/>
            <person name="Fujita K."/>
            <person name="Isono K."/>
            <person name="Choi S."/>
            <person name="Ohtsubo E."/>
            <person name="Baba T."/>
            <person name="Wanner B.L."/>
            <person name="Mori H."/>
            <person name="Horiuchi T."/>
        </authorList>
    </citation>
    <scope>NUCLEOTIDE SEQUENCE [LARGE SCALE GENOMIC DNA]</scope>
    <source>
        <strain>K12 / W3110 / ATCC 27325 / DSM 5911</strain>
    </source>
</reference>
<reference key="5">
    <citation type="journal article" date="1989" name="Biochem. J.">
        <title>Overexpression and site-directed mutagenesis of the succinyl-CoA synthetase of Escherichia coli and nucleotide sequence of a gene (g30) that is adjacent to the suc operon.</title>
        <authorList>
            <person name="Buck D."/>
            <person name="Guest J.R."/>
        </authorList>
    </citation>
    <scope>NUCLEOTIDE SEQUENCE [GENOMIC DNA] OF 173-289</scope>
</reference>
<reference key="6">
    <citation type="journal article" date="1997" name="Electrophoresis">
        <title>Comparing the predicted and observed properties of proteins encoded in the genome of Escherichia coli K-12.</title>
        <authorList>
            <person name="Link A.J."/>
            <person name="Robison K."/>
            <person name="Church G.M."/>
        </authorList>
    </citation>
    <scope>PROTEIN SEQUENCE OF 2-20</scope>
    <source>
        <strain>K12 / EMG2</strain>
    </source>
</reference>
<reference key="7">
    <citation type="submission" date="1996-02" db="UniProtKB">
        <authorList>
            <person name="Frutiger S."/>
            <person name="Hughes G.J."/>
            <person name="Pasquali C."/>
            <person name="Hochstrasser D.F."/>
        </authorList>
    </citation>
    <scope>PROTEIN SEQUENCE OF 2-12</scope>
    <source>
        <strain>K12 / W3110 / ATCC 27325 / DSM 5911</strain>
    </source>
</reference>
<reference key="8">
    <citation type="journal article" date="1995" name="Mol. Microbiol.">
        <title>Identification of phosphoproteins in Escherichia coli.</title>
        <authorList>
            <person name="Freestone P."/>
            <person name="Grant S."/>
            <person name="Toth I."/>
            <person name="Norris V."/>
        </authorList>
    </citation>
    <scope>PHOSPHORYLATION</scope>
    <scope>PROTEIN SEQUENCE OF 2-11</scope>
    <source>
        <strain>E2348/69 / EPEC / MAR001</strain>
    </source>
</reference>
<reference key="9">
    <citation type="journal article" date="1997" name="Electrophoresis">
        <title>Escherichia coli proteome analysis using the gene-protein database.</title>
        <authorList>
            <person name="VanBogelen R.A."/>
            <person name="Abshire K.Z."/>
            <person name="Moldover B."/>
            <person name="Olson E.R."/>
            <person name="Neidhardt F.C."/>
        </authorList>
    </citation>
    <scope>IDENTIFICATION BY 2D-GEL</scope>
</reference>
<reference key="10">
    <citation type="journal article" date="1999" name="Biochemistry">
        <title>Probing the nucleotide-binding site of Escherichia coli succinyl-CoA synthetase.</title>
        <authorList>
            <person name="Joyce M.A."/>
            <person name="Fraser M.E."/>
            <person name="Brownie E.R."/>
            <person name="James M.N."/>
            <person name="Bridger W.A."/>
            <person name="Wolodko W.T."/>
        </authorList>
    </citation>
    <scope>FUNCTION</scope>
    <scope>CATALYTIC ACTIVITY</scope>
    <scope>BIOPHYSICOCHEMICAL PROPERTIES</scope>
</reference>
<reference key="11">
    <citation type="journal article" date="1994" name="J. Biol. Chem.">
        <title>The crystal structure of succinyl-CoA synthetase from Escherichia coli at 2.5-A resolution.</title>
        <authorList>
            <person name="Wolodko W.T."/>
            <person name="Fraser M.E."/>
            <person name="James M.N.G."/>
            <person name="Bridger W.A."/>
        </authorList>
    </citation>
    <scope>X-RAY CRYSTALLOGRAPHY (2.5 ANGSTROMS) IN COMPLEX WITH SUCC AND COENZYME A</scope>
</reference>
<reference key="12">
    <citation type="journal article" date="1999" name="J. Mol. Biol.">
        <title>A detailed structural description of Escherichia coli succinyl-CoA synthetase.</title>
        <authorList>
            <person name="Fraser M.E."/>
            <person name="James M.N."/>
            <person name="Bridger W.A."/>
            <person name="Wolodko W.T."/>
        </authorList>
    </citation>
    <scope>X-RAY CRYSTALLOGRAPHY (2.3 ANGSTROMS) IN COMPLEX WITH SUCC AND COENZYME A</scope>
    <scope>ACTIVE SITE</scope>
</reference>
<reference key="13">
    <citation type="journal article" date="2000" name="Biochemistry">
        <title>ADP-binding site of Escherichia coli succinyl-CoA synthetase revealed by X-ray crystallography.</title>
        <authorList>
            <person name="Joyce M.A."/>
            <person name="Fraser M.E."/>
            <person name="James M.N."/>
            <person name="Bridger W.A."/>
            <person name="Wolodko W.T."/>
        </authorList>
    </citation>
    <scope>X-RAY CRYSTALLOGRAPHY (3.3 ANGSTROMS) IN COMPLEX WITH SUCC AND COENZYME A</scope>
</reference>
<reference key="14">
    <citation type="journal article" date="2002" name="Biochemistry">
        <title>Two glutamate residues, Glu 208 alpha and Glu 197 beta, are crucial for phosphorylation and dephosphorylation of the active-site histidine residue in succinyl-CoA synthetase.</title>
        <authorList>
            <person name="Fraser M.E."/>
            <person name="Joyce M.A."/>
            <person name="Ryan D.G."/>
            <person name="Wolodko W.T."/>
        </authorList>
    </citation>
    <scope>X-RAY CRYSTALLOGRAPHY (2.35 ANGSTROMS) IN COMPLEX WITH SUCC AND COENZYME A</scope>
    <scope>ACTIVE SITE</scope>
    <scope>MUTAGENESIS OF GLU-209</scope>
</reference>
<reference key="15">
    <citation type="journal article" date="2007" name="Acta Crystallogr. D">
        <title>Participation of Cys123alpha of Escherichia coli succinyl-CoA synthetase in catalysis.</title>
        <authorList>
            <person name="Hidber E."/>
            <person name="Brownie E.R."/>
            <person name="Hayakawa K."/>
            <person name="Fraser M.E."/>
        </authorList>
    </citation>
    <scope>X-RAY CRYSTALLOGRAPHY (2.15 ANGSTROMS) IN COMPLEX WITH SUCC AND COENZYME A</scope>
</reference>
<accession>P0AGE9</accession>
<accession>P07459</accession>
<sequence length="289" mass="29777">MSILIDKNTKVICQGFTGSQGTFHSEQAIAYGTKMVGGVTPGKGGTTHLGLPVFNTVREAVAATGATASVIYVPAPFCKDSILEAIDAGIKLIITITEGIPTLDMLTVKVKLDEAGVRMIGPNCPGVITPGECKIGIQPGHIHKPGKVGIVSRSGTLTYEAVKQTTDYGFGQSTCVGIGGDPIPGSNFIDILEMFEKDPQTEAIVMIGEIGGSAEEEAAAYIKEHVTKPVVGYIAGVTAPKGKRMGHAGAIIAGGKGTADEKFAALEAAGVKTVRSLADIGEALKTVLK</sequence>
<organism>
    <name type="scientific">Escherichia coli (strain K12)</name>
    <dbReference type="NCBI Taxonomy" id="83333"/>
    <lineage>
        <taxon>Bacteria</taxon>
        <taxon>Pseudomonadati</taxon>
        <taxon>Pseudomonadota</taxon>
        <taxon>Gammaproteobacteria</taxon>
        <taxon>Enterobacterales</taxon>
        <taxon>Enterobacteriaceae</taxon>
        <taxon>Escherichia</taxon>
    </lineage>
</organism>
<keyword id="KW-0002">3D-structure</keyword>
<keyword id="KW-0903">Direct protein sequencing</keyword>
<keyword id="KW-0436">Ligase</keyword>
<keyword id="KW-0547">Nucleotide-binding</keyword>
<keyword id="KW-1185">Reference proteome</keyword>
<keyword id="KW-0816">Tricarboxylic acid cycle</keyword>
<dbReference type="EC" id="6.2.1.5" evidence="1 2"/>
<dbReference type="EMBL" id="J01619">
    <property type="protein sequence ID" value="AAA23900.1"/>
    <property type="molecule type" value="Genomic_DNA"/>
</dbReference>
<dbReference type="EMBL" id="U00096">
    <property type="protein sequence ID" value="AAC73823.1"/>
    <property type="molecule type" value="Genomic_DNA"/>
</dbReference>
<dbReference type="EMBL" id="AP009048">
    <property type="protein sequence ID" value="BAA35395.1"/>
    <property type="molecule type" value="Genomic_DNA"/>
</dbReference>
<dbReference type="EMBL" id="X15790">
    <property type="protein sequence ID" value="CAA33792.1"/>
    <property type="molecule type" value="Genomic_DNA"/>
</dbReference>
<dbReference type="PIR" id="A90499">
    <property type="entry name" value="SYECSA"/>
</dbReference>
<dbReference type="RefSeq" id="NP_415257.1">
    <property type="nucleotide sequence ID" value="NC_000913.3"/>
</dbReference>
<dbReference type="RefSeq" id="WP_000025458.1">
    <property type="nucleotide sequence ID" value="NZ_STEB01000035.1"/>
</dbReference>
<dbReference type="PDB" id="1CQI">
    <property type="method" value="X-ray"/>
    <property type="resolution" value="3.30 A"/>
    <property type="chains" value="A/D=2-287"/>
</dbReference>
<dbReference type="PDB" id="1CQJ">
    <property type="method" value="X-ray"/>
    <property type="resolution" value="2.90 A"/>
    <property type="chains" value="A/D=2-287"/>
</dbReference>
<dbReference type="PDB" id="1JKJ">
    <property type="method" value="X-ray"/>
    <property type="resolution" value="2.35 A"/>
    <property type="chains" value="A/D=2-289"/>
</dbReference>
<dbReference type="PDB" id="1JLL">
    <property type="method" value="X-ray"/>
    <property type="resolution" value="2.69 A"/>
    <property type="chains" value="A/D=2-289"/>
</dbReference>
<dbReference type="PDB" id="1SCU">
    <property type="method" value="X-ray"/>
    <property type="resolution" value="2.50 A"/>
    <property type="chains" value="A/D=2-289"/>
</dbReference>
<dbReference type="PDB" id="2NU6">
    <property type="method" value="X-ray"/>
    <property type="resolution" value="2.55 A"/>
    <property type="chains" value="A/D=2-289"/>
</dbReference>
<dbReference type="PDB" id="2NU7">
    <property type="method" value="X-ray"/>
    <property type="resolution" value="2.20 A"/>
    <property type="chains" value="A/D=2-289"/>
</dbReference>
<dbReference type="PDB" id="2NU8">
    <property type="method" value="X-ray"/>
    <property type="resolution" value="2.15 A"/>
    <property type="chains" value="A/D=2-289"/>
</dbReference>
<dbReference type="PDB" id="2NU9">
    <property type="method" value="X-ray"/>
    <property type="resolution" value="2.90 A"/>
    <property type="chains" value="A/D/F/H=2-289"/>
</dbReference>
<dbReference type="PDB" id="2NUA">
    <property type="method" value="X-ray"/>
    <property type="resolution" value="2.95 A"/>
    <property type="chains" value="A/D=2-289"/>
</dbReference>
<dbReference type="PDB" id="2SCU">
    <property type="method" value="X-ray"/>
    <property type="resolution" value="2.30 A"/>
    <property type="chains" value="A/D=2-289"/>
</dbReference>
<dbReference type="PDBsum" id="1CQI"/>
<dbReference type="PDBsum" id="1CQJ"/>
<dbReference type="PDBsum" id="1JKJ"/>
<dbReference type="PDBsum" id="1JLL"/>
<dbReference type="PDBsum" id="1SCU"/>
<dbReference type="PDBsum" id="2NU6"/>
<dbReference type="PDBsum" id="2NU7"/>
<dbReference type="PDBsum" id="2NU8"/>
<dbReference type="PDBsum" id="2NU9"/>
<dbReference type="PDBsum" id="2NUA"/>
<dbReference type="PDBsum" id="2SCU"/>
<dbReference type="SMR" id="P0AGE9"/>
<dbReference type="BioGRID" id="4259936">
    <property type="interactions" value="59"/>
</dbReference>
<dbReference type="BioGRID" id="849691">
    <property type="interactions" value="1"/>
</dbReference>
<dbReference type="ComplexPortal" id="CPX-1092">
    <property type="entry name" value="Succinyl-CoA synthetase"/>
</dbReference>
<dbReference type="DIP" id="DIP-31851N"/>
<dbReference type="FunCoup" id="P0AGE9">
    <property type="interactions" value="850"/>
</dbReference>
<dbReference type="IntAct" id="P0AGE9">
    <property type="interactions" value="7"/>
</dbReference>
<dbReference type="STRING" id="511145.b0729"/>
<dbReference type="jPOST" id="P0AGE9"/>
<dbReference type="PaxDb" id="511145-b0729"/>
<dbReference type="EnsemblBacteria" id="AAC73823">
    <property type="protein sequence ID" value="AAC73823"/>
    <property type="gene ID" value="b0729"/>
</dbReference>
<dbReference type="GeneID" id="93776756"/>
<dbReference type="GeneID" id="945314"/>
<dbReference type="KEGG" id="ecj:JW0718"/>
<dbReference type="KEGG" id="eco:b0729"/>
<dbReference type="KEGG" id="ecoc:C3026_03650"/>
<dbReference type="PATRIC" id="fig|1411691.4.peg.1544"/>
<dbReference type="EchoBASE" id="EB0975"/>
<dbReference type="eggNOG" id="COG0074">
    <property type="taxonomic scope" value="Bacteria"/>
</dbReference>
<dbReference type="HOGENOM" id="CLU_052104_0_0_6"/>
<dbReference type="InParanoid" id="P0AGE9"/>
<dbReference type="OMA" id="VIICITE"/>
<dbReference type="OrthoDB" id="9807196at2"/>
<dbReference type="PhylomeDB" id="P0AGE9"/>
<dbReference type="BioCyc" id="EcoCyc:SUCCCOASYN-ALPHA"/>
<dbReference type="BioCyc" id="MetaCyc:SUCCCOASYN-ALPHA"/>
<dbReference type="BRENDA" id="6.2.1.5">
    <property type="organism ID" value="2165"/>
</dbReference>
<dbReference type="UniPathway" id="UPA00223">
    <property type="reaction ID" value="UER00999"/>
</dbReference>
<dbReference type="EvolutionaryTrace" id="P0AGE9"/>
<dbReference type="PRO" id="PR:P0AGE9"/>
<dbReference type="Proteomes" id="UP000000625">
    <property type="component" value="Chromosome"/>
</dbReference>
<dbReference type="GO" id="GO:0005737">
    <property type="term" value="C:cytoplasm"/>
    <property type="evidence" value="ECO:0007005"/>
    <property type="project" value="UniProtKB"/>
</dbReference>
<dbReference type="GO" id="GO:0005829">
    <property type="term" value="C:cytosol"/>
    <property type="evidence" value="ECO:0000314"/>
    <property type="project" value="EcoCyc"/>
</dbReference>
<dbReference type="GO" id="GO:0009361">
    <property type="term" value="C:succinate-CoA ligase complex (ADP-forming)"/>
    <property type="evidence" value="ECO:0000314"/>
    <property type="project" value="EcoCyc"/>
</dbReference>
<dbReference type="GO" id="GO:0000166">
    <property type="term" value="F:nucleotide binding"/>
    <property type="evidence" value="ECO:0007669"/>
    <property type="project" value="UniProtKB-KW"/>
</dbReference>
<dbReference type="GO" id="GO:0004775">
    <property type="term" value="F:succinate-CoA ligase (ADP-forming) activity"/>
    <property type="evidence" value="ECO:0000318"/>
    <property type="project" value="GO_Central"/>
</dbReference>
<dbReference type="GO" id="GO:0004776">
    <property type="term" value="F:succinate-CoA ligase (GDP-forming) activity"/>
    <property type="evidence" value="ECO:0000318"/>
    <property type="project" value="GO_Central"/>
</dbReference>
<dbReference type="GO" id="GO:0006099">
    <property type="term" value="P:tricarboxylic acid cycle"/>
    <property type="evidence" value="ECO:0000318"/>
    <property type="project" value="GO_Central"/>
</dbReference>
<dbReference type="FunFam" id="3.40.50.261:FF:000002">
    <property type="entry name" value="Succinate--CoA ligase [ADP-forming] subunit alpha"/>
    <property type="match status" value="1"/>
</dbReference>
<dbReference type="FunFam" id="3.40.50.720:FF:000002">
    <property type="entry name" value="Succinate--CoA ligase [ADP-forming] subunit alpha"/>
    <property type="match status" value="1"/>
</dbReference>
<dbReference type="Gene3D" id="3.40.50.720">
    <property type="entry name" value="NAD(P)-binding Rossmann-like Domain"/>
    <property type="match status" value="1"/>
</dbReference>
<dbReference type="Gene3D" id="3.40.50.261">
    <property type="entry name" value="Succinyl-CoA synthetase domains"/>
    <property type="match status" value="1"/>
</dbReference>
<dbReference type="HAMAP" id="MF_01988">
    <property type="entry name" value="Succ_CoA_alpha"/>
    <property type="match status" value="1"/>
</dbReference>
<dbReference type="InterPro" id="IPR017440">
    <property type="entry name" value="Cit_synth/succinyl-CoA_lig_AS"/>
</dbReference>
<dbReference type="InterPro" id="IPR033847">
    <property type="entry name" value="Citrt_syn/SCS-alpha_CS"/>
</dbReference>
<dbReference type="InterPro" id="IPR003781">
    <property type="entry name" value="CoA-bd"/>
</dbReference>
<dbReference type="InterPro" id="IPR005810">
    <property type="entry name" value="CoA_lig_alpha"/>
</dbReference>
<dbReference type="InterPro" id="IPR036291">
    <property type="entry name" value="NAD(P)-bd_dom_sf"/>
</dbReference>
<dbReference type="InterPro" id="IPR005811">
    <property type="entry name" value="SUCC_ACL_C"/>
</dbReference>
<dbReference type="InterPro" id="IPR016102">
    <property type="entry name" value="Succinyl-CoA_synth-like"/>
</dbReference>
<dbReference type="NCBIfam" id="NF004230">
    <property type="entry name" value="PRK05678.1"/>
    <property type="match status" value="1"/>
</dbReference>
<dbReference type="NCBIfam" id="TIGR01019">
    <property type="entry name" value="sucCoAalpha"/>
    <property type="match status" value="1"/>
</dbReference>
<dbReference type="PANTHER" id="PTHR11117:SF2">
    <property type="entry name" value="SUCCINATE--COA LIGASE [ADP_GDP-FORMING] SUBUNIT ALPHA, MITOCHONDRIAL"/>
    <property type="match status" value="1"/>
</dbReference>
<dbReference type="PANTHER" id="PTHR11117">
    <property type="entry name" value="SUCCINYL-COA LIGASE SUBUNIT ALPHA"/>
    <property type="match status" value="1"/>
</dbReference>
<dbReference type="Pfam" id="PF02629">
    <property type="entry name" value="CoA_binding"/>
    <property type="match status" value="1"/>
</dbReference>
<dbReference type="Pfam" id="PF00549">
    <property type="entry name" value="Ligase_CoA"/>
    <property type="match status" value="1"/>
</dbReference>
<dbReference type="PIRSF" id="PIRSF001553">
    <property type="entry name" value="SucCS_alpha"/>
    <property type="match status" value="1"/>
</dbReference>
<dbReference type="PRINTS" id="PR01798">
    <property type="entry name" value="SCOASYNTHASE"/>
</dbReference>
<dbReference type="SMART" id="SM00881">
    <property type="entry name" value="CoA_binding"/>
    <property type="match status" value="1"/>
</dbReference>
<dbReference type="SUPFAM" id="SSF51735">
    <property type="entry name" value="NAD(P)-binding Rossmann-fold domains"/>
    <property type="match status" value="1"/>
</dbReference>
<dbReference type="SUPFAM" id="SSF52210">
    <property type="entry name" value="Succinyl-CoA synthetase domains"/>
    <property type="match status" value="1"/>
</dbReference>
<dbReference type="PROSITE" id="PS01216">
    <property type="entry name" value="SUCCINYL_COA_LIG_1"/>
    <property type="match status" value="1"/>
</dbReference>
<dbReference type="PROSITE" id="PS00399">
    <property type="entry name" value="SUCCINYL_COA_LIG_2"/>
    <property type="match status" value="1"/>
</dbReference>
<feature type="initiator methionine" description="Removed" evidence="5 7 9">
    <location>
        <position position="1"/>
    </location>
</feature>
<feature type="chain" id="PRO_0000102791" description="Succinate--CoA ligase [ADP-forming] subunit alpha">
    <location>
        <begin position="2"/>
        <end position="289"/>
    </location>
</feature>
<feature type="active site" description="Tele-phosphohistidine intermediate" evidence="1 4 8">
    <location>
        <position position="247"/>
    </location>
</feature>
<feature type="binding site" evidence="1 3 4 6 8">
    <location>
        <begin position="17"/>
        <end position="20"/>
    </location>
    <ligand>
        <name>CoA</name>
        <dbReference type="ChEBI" id="CHEBI:57287"/>
    </ligand>
</feature>
<feature type="binding site" evidence="1 3 4 6 8">
    <location>
        <position position="43"/>
    </location>
    <ligand>
        <name>CoA</name>
        <dbReference type="ChEBI" id="CHEBI:57287"/>
    </ligand>
</feature>
<feature type="binding site" evidence="1 3 4 6 8">
    <location>
        <begin position="96"/>
        <end position="98"/>
    </location>
    <ligand>
        <name>CoA</name>
        <dbReference type="ChEBI" id="CHEBI:57287"/>
    </ligand>
</feature>
<feature type="binding site" evidence="1">
    <location>
        <position position="159"/>
    </location>
    <ligand>
        <name>substrate</name>
        <note>ligand shared with subunit beta</note>
    </ligand>
</feature>
<feature type="mutagenesis site" description="Prevents phosphorylation of the enzyme intermediate by succinyl-CoA and phosphate." evidence="4">
    <original>E</original>
    <variation>Q</variation>
    <location>
        <position position="209"/>
    </location>
</feature>
<feature type="strand" evidence="12">
    <location>
        <begin position="10"/>
        <end position="14"/>
    </location>
</feature>
<feature type="turn" evidence="12">
    <location>
        <begin position="15"/>
        <end position="17"/>
    </location>
</feature>
<feature type="helix" evidence="12">
    <location>
        <begin position="19"/>
        <end position="31"/>
    </location>
</feature>
<feature type="strand" evidence="12">
    <location>
        <begin position="34"/>
        <end position="39"/>
    </location>
</feature>
<feature type="strand" evidence="11">
    <location>
        <begin position="46"/>
        <end position="48"/>
    </location>
</feature>
<feature type="strand" evidence="12">
    <location>
        <begin position="51"/>
        <end position="56"/>
    </location>
</feature>
<feature type="helix" evidence="12">
    <location>
        <begin position="57"/>
        <end position="64"/>
    </location>
</feature>
<feature type="strand" evidence="12">
    <location>
        <begin position="68"/>
        <end position="71"/>
    </location>
</feature>
<feature type="helix" evidence="12">
    <location>
        <begin position="75"/>
        <end position="77"/>
    </location>
</feature>
<feature type="helix" evidence="12">
    <location>
        <begin position="78"/>
        <end position="87"/>
    </location>
</feature>
<feature type="strand" evidence="12">
    <location>
        <begin position="91"/>
        <end position="95"/>
    </location>
</feature>
<feature type="helix" evidence="12">
    <location>
        <begin position="102"/>
        <end position="115"/>
    </location>
</feature>
<feature type="strand" evidence="12">
    <location>
        <begin position="118"/>
        <end position="120"/>
    </location>
</feature>
<feature type="strand" evidence="14">
    <location>
        <begin position="122"/>
        <end position="124"/>
    </location>
</feature>
<feature type="strand" evidence="12">
    <location>
        <begin position="126"/>
        <end position="129"/>
    </location>
</feature>
<feature type="turn" evidence="12">
    <location>
        <begin position="130"/>
        <end position="132"/>
    </location>
</feature>
<feature type="strand" evidence="12">
    <location>
        <begin position="133"/>
        <end position="138"/>
    </location>
</feature>
<feature type="helix" evidence="11">
    <location>
        <begin position="140"/>
        <end position="142"/>
    </location>
</feature>
<feature type="strand" evidence="12">
    <location>
        <begin position="145"/>
        <end position="153"/>
    </location>
</feature>
<feature type="helix" evidence="12">
    <location>
        <begin position="155"/>
        <end position="167"/>
    </location>
</feature>
<feature type="strand" evidence="12">
    <location>
        <begin position="172"/>
        <end position="177"/>
    </location>
</feature>
<feature type="strand" evidence="12">
    <location>
        <begin position="180"/>
        <end position="183"/>
    </location>
</feature>
<feature type="helix" evidence="12">
    <location>
        <begin position="188"/>
        <end position="196"/>
    </location>
</feature>
<feature type="strand" evidence="12">
    <location>
        <begin position="203"/>
        <end position="213"/>
    </location>
</feature>
<feature type="helix" evidence="12">
    <location>
        <begin position="214"/>
        <end position="225"/>
    </location>
</feature>
<feature type="strand" evidence="12">
    <location>
        <begin position="230"/>
        <end position="235"/>
    </location>
</feature>
<feature type="strand" evidence="13">
    <location>
        <begin position="241"/>
        <end position="243"/>
    </location>
</feature>
<feature type="helix" evidence="13">
    <location>
        <begin position="248"/>
        <end position="250"/>
    </location>
</feature>
<feature type="helix" evidence="11">
    <location>
        <begin position="253"/>
        <end position="255"/>
    </location>
</feature>
<feature type="helix" evidence="12">
    <location>
        <begin position="259"/>
        <end position="268"/>
    </location>
</feature>
<feature type="helix" evidence="12">
    <location>
        <begin position="277"/>
        <end position="279"/>
    </location>
</feature>
<feature type="helix" evidence="12">
    <location>
        <begin position="280"/>
        <end position="287"/>
    </location>
</feature>